<dbReference type="EC" id="2.1.1.248"/>
<dbReference type="EMBL" id="AF230870">
    <property type="protein sequence ID" value="AAF68952.2"/>
    <property type="molecule type" value="Genomic_DNA"/>
</dbReference>
<dbReference type="BRENDA" id="2.1.1.248">
    <property type="organism ID" value="3250"/>
</dbReference>
<dbReference type="UniPathway" id="UPA00643"/>
<dbReference type="GO" id="GO:0043852">
    <property type="term" value="F:monomethylamine methyltransferase activity"/>
    <property type="evidence" value="ECO:0000314"/>
    <property type="project" value="MENGO"/>
</dbReference>
<dbReference type="GO" id="GO:0015948">
    <property type="term" value="P:methanogenesis"/>
    <property type="evidence" value="ECO:0007669"/>
    <property type="project" value="UniProtKB-KW"/>
</dbReference>
<dbReference type="GO" id="GO:0032259">
    <property type="term" value="P:methylation"/>
    <property type="evidence" value="ECO:0007669"/>
    <property type="project" value="UniProtKB-KW"/>
</dbReference>
<dbReference type="FunFam" id="3.20.20.460:FF:000001">
    <property type="entry name" value="Monomethylamine methyltransferase MtmB1"/>
    <property type="match status" value="1"/>
</dbReference>
<dbReference type="Gene3D" id="3.20.20.460">
    <property type="entry name" value="Monomethylamine methyltransferase MtmB"/>
    <property type="match status" value="1"/>
</dbReference>
<dbReference type="InterPro" id="IPR008031">
    <property type="entry name" value="MtmB_MeTrfase"/>
</dbReference>
<dbReference type="InterPro" id="IPR036655">
    <property type="entry name" value="MtmB_sf"/>
</dbReference>
<dbReference type="Pfam" id="PF05369">
    <property type="entry name" value="MtmB"/>
    <property type="match status" value="1"/>
</dbReference>
<dbReference type="SUPFAM" id="SSF75098">
    <property type="entry name" value="Monomethylamine methyltransferase MtmB"/>
    <property type="match status" value="1"/>
</dbReference>
<comment type="function">
    <text evidence="1">Catalyzes the transfer of the methyl group from monomethylamine to the corrinoid cofactor of MtmC (MtmC1 or MtmC2).</text>
</comment>
<comment type="catalytic activity">
    <reaction>
        <text>Co(I)-[methylamine-specific corrinoid protein] + methylamine + H(+) = methyl-Co(III)-[methylamine-specific corrinoid protein] + NH4(+)</text>
        <dbReference type="Rhea" id="RHEA:26059"/>
        <dbReference type="Rhea" id="RHEA-COMP:11120"/>
        <dbReference type="Rhea" id="RHEA-COMP:11121"/>
        <dbReference type="ChEBI" id="CHEBI:15378"/>
        <dbReference type="ChEBI" id="CHEBI:28938"/>
        <dbReference type="ChEBI" id="CHEBI:59338"/>
        <dbReference type="ChEBI" id="CHEBI:85033"/>
        <dbReference type="ChEBI" id="CHEBI:85035"/>
        <dbReference type="EC" id="2.1.1.248"/>
    </reaction>
</comment>
<comment type="pathway">
    <text>One-carbon metabolism; methanogenesis from methylamine.</text>
</comment>
<comment type="subunit">
    <text evidence="1">Can form a complex with MtmC (MtmC1 or MtmC2).</text>
</comment>
<comment type="similarity">
    <text evidence="2">Belongs to the monomethylamine methyltransferase family.</text>
</comment>
<reference key="1">
    <citation type="submission" date="2000-02" db="EMBL/GenBank/DDBJ databases">
        <title>Expression of two nearly identical copies of genes for monomethylamine methyltransferase and their cognate corrinoid proteins in Methanosarcina barkeri.</title>
        <authorList>
            <person name="Srinivasan G."/>
            <person name="Burke S.A."/>
            <person name="Lo S.L."/>
            <person name="Krzycki J.A."/>
        </authorList>
    </citation>
    <scope>NUCLEOTIDE SEQUENCE [GENOMIC DNA]</scope>
    <source>
        <strain>ATCC 43569 / MS / DSM 800 / JCM 10043 / NBRC 100474</strain>
    </source>
</reference>
<keyword id="KW-0484">Methanogenesis</keyword>
<keyword id="KW-0489">Methyltransferase</keyword>
<keyword id="KW-0669">Pyrrolysine</keyword>
<keyword id="KW-0808">Transferase</keyword>
<feature type="initiator methionine" description="Removed" evidence="1">
    <location>
        <position position="1"/>
    </location>
</feature>
<feature type="chain" id="PRO_0000216551" description="Monomethylamine methyltransferase MtmB2">
    <location>
        <begin position="2"/>
        <end position="458"/>
    </location>
</feature>
<feature type="non-standard amino acid" description="Pyrrolysine" evidence="1">
    <location>
        <position position="202"/>
    </location>
</feature>
<accession>Q9P9L4</accession>
<sequence>MTFRKYFDCYDFYDRAKVGEKCTLDDWDLMKIPMKAMELKQKYGLDFKGEFIPTDKDMMEKLFKAGFEMLLECGIYCTDTHRIVKYTEDEIWDAINNVQKEFVLGTGRDAVNVRKRSVGDKAKPIVQGGPTGSPISEDVFMPVHMSYALEKEVDTIVNGVMTTVRGKAPIPKSPYEVLAAKTETRLIKNACAMAGRPGMGVOGPETSLSAQGNISADCAGGMTCTDSHEVSQLCELKIDLDAISVIAHYTANSDIIMDEQMPIFGGYAGGIEETTIVDVATHINAVLMSSASWHLDGPVHIRWGSTNTRETLMIAGWACATISEFTDILSGNQYYPCAGPCTEMCLLEASAQSITDTASGREILSGVASAKGVVTDKTTGMEARMMGEVARATAGVEISEVNVILDKLVALYEKNYASAPAGKTFQECYDVKTVTPTDEYMQVYDGARKKLEDLGLVF</sequence>
<protein>
    <recommendedName>
        <fullName>Monomethylamine methyltransferase MtmB2</fullName>
        <shortName>MMA methyltransferase 2</shortName>
        <shortName>MMAMT 2</shortName>
        <ecNumber>2.1.1.248</ecNumber>
    </recommendedName>
</protein>
<evidence type="ECO:0000250" key="1"/>
<evidence type="ECO:0000305" key="2"/>
<name>MTMB2_METBA</name>
<proteinExistence type="inferred from homology"/>
<organism>
    <name type="scientific">Methanosarcina barkeri</name>
    <dbReference type="NCBI Taxonomy" id="2208"/>
    <lineage>
        <taxon>Archaea</taxon>
        <taxon>Methanobacteriati</taxon>
        <taxon>Methanobacteriota</taxon>
        <taxon>Stenosarchaea group</taxon>
        <taxon>Methanomicrobia</taxon>
        <taxon>Methanosarcinales</taxon>
        <taxon>Methanosarcinaceae</taxon>
        <taxon>Methanosarcina</taxon>
    </lineage>
</organism>
<gene>
    <name type="primary">mtmB2</name>
</gene>